<gene>
    <name type="ordered locus">At1g74510</name>
    <name type="ORF">F1M20.19</name>
</gene>
<dbReference type="EMBL" id="AC011765">
    <property type="protein sequence ID" value="AAG52353.1"/>
    <property type="molecule type" value="Genomic_DNA"/>
</dbReference>
<dbReference type="EMBL" id="CP002684">
    <property type="protein sequence ID" value="AEE35601.1"/>
    <property type="molecule type" value="Genomic_DNA"/>
</dbReference>
<dbReference type="EMBL" id="CP002684">
    <property type="protein sequence ID" value="AEE35602.1"/>
    <property type="molecule type" value="Genomic_DNA"/>
</dbReference>
<dbReference type="EMBL" id="CP002684">
    <property type="protein sequence ID" value="ANM59124.1"/>
    <property type="molecule type" value="Genomic_DNA"/>
</dbReference>
<dbReference type="EMBL" id="BT005714">
    <property type="protein sequence ID" value="AAO64134.1"/>
    <property type="molecule type" value="mRNA"/>
</dbReference>
<dbReference type="EMBL" id="BT006071">
    <property type="protein sequence ID" value="AAP04056.1"/>
    <property type="molecule type" value="mRNA"/>
</dbReference>
<dbReference type="EMBL" id="AK228375">
    <property type="protein sequence ID" value="BAF00313.1"/>
    <property type="molecule type" value="mRNA"/>
</dbReference>
<dbReference type="PIR" id="B96774">
    <property type="entry name" value="B96774"/>
</dbReference>
<dbReference type="RefSeq" id="NP_001321513.1">
    <property type="nucleotide sequence ID" value="NM_001334651.1"/>
</dbReference>
<dbReference type="RefSeq" id="NP_177591.1">
    <property type="nucleotide sequence ID" value="NM_106111.4"/>
</dbReference>
<dbReference type="RefSeq" id="NP_849884.1">
    <property type="nucleotide sequence ID" value="NM_179553.1"/>
</dbReference>
<dbReference type="SMR" id="Q9CA63"/>
<dbReference type="FunCoup" id="Q9CA63">
    <property type="interactions" value="905"/>
</dbReference>
<dbReference type="STRING" id="3702.Q9CA63"/>
<dbReference type="PaxDb" id="3702-AT1G74510.2"/>
<dbReference type="ProteomicsDB" id="222485"/>
<dbReference type="EnsemblPlants" id="AT1G74510.1">
    <property type="protein sequence ID" value="AT1G74510.1"/>
    <property type="gene ID" value="AT1G74510"/>
</dbReference>
<dbReference type="EnsemblPlants" id="AT1G74510.2">
    <property type="protein sequence ID" value="AT1G74510.2"/>
    <property type="gene ID" value="AT1G74510"/>
</dbReference>
<dbReference type="EnsemblPlants" id="AT1G74510.3">
    <property type="protein sequence ID" value="AT1G74510.3"/>
    <property type="gene ID" value="AT1G74510"/>
</dbReference>
<dbReference type="GeneID" id="843792"/>
<dbReference type="Gramene" id="AT1G74510.1">
    <property type="protein sequence ID" value="AT1G74510.1"/>
    <property type="gene ID" value="AT1G74510"/>
</dbReference>
<dbReference type="Gramene" id="AT1G74510.2">
    <property type="protein sequence ID" value="AT1G74510.2"/>
    <property type="gene ID" value="AT1G74510"/>
</dbReference>
<dbReference type="Gramene" id="AT1G74510.3">
    <property type="protein sequence ID" value="AT1G74510.3"/>
    <property type="gene ID" value="AT1G74510"/>
</dbReference>
<dbReference type="KEGG" id="ath:AT1G74510"/>
<dbReference type="Araport" id="AT1G74510"/>
<dbReference type="TAIR" id="AT1G74510"/>
<dbReference type="eggNOG" id="KOG1072">
    <property type="taxonomic scope" value="Eukaryota"/>
</dbReference>
<dbReference type="HOGENOM" id="CLU_028510_0_1_1"/>
<dbReference type="InParanoid" id="Q9CA63"/>
<dbReference type="OMA" id="YAENEVW"/>
<dbReference type="OrthoDB" id="191037at2759"/>
<dbReference type="PhylomeDB" id="Q9CA63"/>
<dbReference type="PRO" id="PR:Q9CA63"/>
<dbReference type="Proteomes" id="UP000006548">
    <property type="component" value="Chromosome 1"/>
</dbReference>
<dbReference type="ExpressionAtlas" id="Q9CA63">
    <property type="expression patterns" value="baseline and differential"/>
</dbReference>
<dbReference type="GO" id="GO:0005634">
    <property type="term" value="C:nucleus"/>
    <property type="evidence" value="ECO:0000314"/>
    <property type="project" value="TAIR"/>
</dbReference>
<dbReference type="FunFam" id="2.120.10.80:FF:000007">
    <property type="entry name" value="F-box/kelch-repeat protein SKIP11"/>
    <property type="match status" value="1"/>
</dbReference>
<dbReference type="Gene3D" id="2.120.10.80">
    <property type="entry name" value="Kelch-type beta propeller"/>
    <property type="match status" value="1"/>
</dbReference>
<dbReference type="InterPro" id="IPR036047">
    <property type="entry name" value="F-box-like_dom_sf"/>
</dbReference>
<dbReference type="InterPro" id="IPR052439">
    <property type="entry name" value="F-box/Kelch-repeat"/>
</dbReference>
<dbReference type="InterPro" id="IPR001810">
    <property type="entry name" value="F-box_dom"/>
</dbReference>
<dbReference type="InterPro" id="IPR015915">
    <property type="entry name" value="Kelch-typ_b-propeller"/>
</dbReference>
<dbReference type="InterPro" id="IPR006652">
    <property type="entry name" value="Kelch_1"/>
</dbReference>
<dbReference type="PANTHER" id="PTHR46122:SF9">
    <property type="entry name" value="F-BOX_KELCH-REPEAT PROTEIN"/>
    <property type="match status" value="1"/>
</dbReference>
<dbReference type="PANTHER" id="PTHR46122">
    <property type="entry name" value="GALACTOSE OXIDASE/KELCH REPEAT PROTEIN-RELATED"/>
    <property type="match status" value="1"/>
</dbReference>
<dbReference type="Pfam" id="PF00646">
    <property type="entry name" value="F-box"/>
    <property type="match status" value="1"/>
</dbReference>
<dbReference type="Pfam" id="PF01344">
    <property type="entry name" value="Kelch_1"/>
    <property type="match status" value="2"/>
</dbReference>
<dbReference type="SMART" id="SM00612">
    <property type="entry name" value="Kelch"/>
    <property type="match status" value="2"/>
</dbReference>
<dbReference type="SUPFAM" id="SSF81383">
    <property type="entry name" value="F-box domain"/>
    <property type="match status" value="1"/>
</dbReference>
<dbReference type="SUPFAM" id="SSF117281">
    <property type="entry name" value="Kelch motif"/>
    <property type="match status" value="1"/>
</dbReference>
<organism>
    <name type="scientific">Arabidopsis thaliana</name>
    <name type="common">Mouse-ear cress</name>
    <dbReference type="NCBI Taxonomy" id="3702"/>
    <lineage>
        <taxon>Eukaryota</taxon>
        <taxon>Viridiplantae</taxon>
        <taxon>Streptophyta</taxon>
        <taxon>Embryophyta</taxon>
        <taxon>Tracheophyta</taxon>
        <taxon>Spermatophyta</taxon>
        <taxon>Magnoliopsida</taxon>
        <taxon>eudicotyledons</taxon>
        <taxon>Gunneridae</taxon>
        <taxon>Pentapetalae</taxon>
        <taxon>rosids</taxon>
        <taxon>malvids</taxon>
        <taxon>Brassicales</taxon>
        <taxon>Brassicaceae</taxon>
        <taxon>Camelineae</taxon>
        <taxon>Arabidopsis</taxon>
    </lineage>
</organism>
<protein>
    <recommendedName>
        <fullName>F-box/kelch-repeat protein At1g74510</fullName>
    </recommendedName>
</protein>
<sequence>MLEAPSYLVSRDLPSSCEEESKWIYNAHCVLQLSLRKRLLDDTDVEGSSAKKMLRVDHGSRGESDKITDSLQLAKTYQSSNQSQQGGGGDQQSSPVTRLDQNALLNCLAHCSLSDFGSIASTNRTFRSLIKDSELYRLRRAKGIVEHWIYFSCRLLEWEAYDPNGDRWLRVPKMTFNECFMCSDKESLAVGTELLVFGKEIMSHVIYRYSILTNTWTSGMQMNVPRCLFGSASLGEIAVIAGGCDPRGRILSSAELYNSETGEWTVIPSMNKARKMCSSVFMDGNFYCIGGIGEGNSKMLLCGEVYDLKKKTWTLIPNMLPERSSGGGGDQAKEIAAATAASEAPPLVAVVKDELYAANYAQQEVKKYDKRLNVWNKVGNLPERASSMNGWGMAFRACGDQLVVVGGPRAIGGGFIEINACVPSEGTQLHWRVLASKPSGNFVYNCAVMGC</sequence>
<proteinExistence type="evidence at transcript level"/>
<accession>Q9CA63</accession>
<reference key="1">
    <citation type="journal article" date="2000" name="Nature">
        <title>Sequence and analysis of chromosome 1 of the plant Arabidopsis thaliana.</title>
        <authorList>
            <person name="Theologis A."/>
            <person name="Ecker J.R."/>
            <person name="Palm C.J."/>
            <person name="Federspiel N.A."/>
            <person name="Kaul S."/>
            <person name="White O."/>
            <person name="Alonso J."/>
            <person name="Altafi H."/>
            <person name="Araujo R."/>
            <person name="Bowman C.L."/>
            <person name="Brooks S.Y."/>
            <person name="Buehler E."/>
            <person name="Chan A."/>
            <person name="Chao Q."/>
            <person name="Chen H."/>
            <person name="Cheuk R.F."/>
            <person name="Chin C.W."/>
            <person name="Chung M.K."/>
            <person name="Conn L."/>
            <person name="Conway A.B."/>
            <person name="Conway A.R."/>
            <person name="Creasy T.H."/>
            <person name="Dewar K."/>
            <person name="Dunn P."/>
            <person name="Etgu P."/>
            <person name="Feldblyum T.V."/>
            <person name="Feng J.-D."/>
            <person name="Fong B."/>
            <person name="Fujii C.Y."/>
            <person name="Gill J.E."/>
            <person name="Goldsmith A.D."/>
            <person name="Haas B."/>
            <person name="Hansen N.F."/>
            <person name="Hughes B."/>
            <person name="Huizar L."/>
            <person name="Hunter J.L."/>
            <person name="Jenkins J."/>
            <person name="Johnson-Hopson C."/>
            <person name="Khan S."/>
            <person name="Khaykin E."/>
            <person name="Kim C.J."/>
            <person name="Koo H.L."/>
            <person name="Kremenetskaia I."/>
            <person name="Kurtz D.B."/>
            <person name="Kwan A."/>
            <person name="Lam B."/>
            <person name="Langin-Hooper S."/>
            <person name="Lee A."/>
            <person name="Lee J.M."/>
            <person name="Lenz C.A."/>
            <person name="Li J.H."/>
            <person name="Li Y.-P."/>
            <person name="Lin X."/>
            <person name="Liu S.X."/>
            <person name="Liu Z.A."/>
            <person name="Luros J.S."/>
            <person name="Maiti R."/>
            <person name="Marziali A."/>
            <person name="Militscher J."/>
            <person name="Miranda M."/>
            <person name="Nguyen M."/>
            <person name="Nierman W.C."/>
            <person name="Osborne B.I."/>
            <person name="Pai G."/>
            <person name="Peterson J."/>
            <person name="Pham P.K."/>
            <person name="Rizzo M."/>
            <person name="Rooney T."/>
            <person name="Rowley D."/>
            <person name="Sakano H."/>
            <person name="Salzberg S.L."/>
            <person name="Schwartz J.R."/>
            <person name="Shinn P."/>
            <person name="Southwick A.M."/>
            <person name="Sun H."/>
            <person name="Tallon L.J."/>
            <person name="Tambunga G."/>
            <person name="Toriumi M.J."/>
            <person name="Town C.D."/>
            <person name="Utterback T."/>
            <person name="Van Aken S."/>
            <person name="Vaysberg M."/>
            <person name="Vysotskaia V.S."/>
            <person name="Walker M."/>
            <person name="Wu D."/>
            <person name="Yu G."/>
            <person name="Fraser C.M."/>
            <person name="Venter J.C."/>
            <person name="Davis R.W."/>
        </authorList>
    </citation>
    <scope>NUCLEOTIDE SEQUENCE [LARGE SCALE GENOMIC DNA]</scope>
    <source>
        <strain>cv. Columbia</strain>
    </source>
</reference>
<reference key="2">
    <citation type="journal article" date="2017" name="Plant J.">
        <title>Araport11: a complete reannotation of the Arabidopsis thaliana reference genome.</title>
        <authorList>
            <person name="Cheng C.Y."/>
            <person name="Krishnakumar V."/>
            <person name="Chan A.P."/>
            <person name="Thibaud-Nissen F."/>
            <person name="Schobel S."/>
            <person name="Town C.D."/>
        </authorList>
    </citation>
    <scope>GENOME REANNOTATION</scope>
    <source>
        <strain>cv. Columbia</strain>
    </source>
</reference>
<reference key="3">
    <citation type="journal article" date="2003" name="Science">
        <title>Empirical analysis of transcriptional activity in the Arabidopsis genome.</title>
        <authorList>
            <person name="Yamada K."/>
            <person name="Lim J."/>
            <person name="Dale J.M."/>
            <person name="Chen H."/>
            <person name="Shinn P."/>
            <person name="Palm C.J."/>
            <person name="Southwick A.M."/>
            <person name="Wu H.C."/>
            <person name="Kim C.J."/>
            <person name="Nguyen M."/>
            <person name="Pham P.K."/>
            <person name="Cheuk R.F."/>
            <person name="Karlin-Newmann G."/>
            <person name="Liu S.X."/>
            <person name="Lam B."/>
            <person name="Sakano H."/>
            <person name="Wu T."/>
            <person name="Yu G."/>
            <person name="Miranda M."/>
            <person name="Quach H.L."/>
            <person name="Tripp M."/>
            <person name="Chang C.H."/>
            <person name="Lee J.M."/>
            <person name="Toriumi M.J."/>
            <person name="Chan M.M."/>
            <person name="Tang C.C."/>
            <person name="Onodera C.S."/>
            <person name="Deng J.M."/>
            <person name="Akiyama K."/>
            <person name="Ansari Y."/>
            <person name="Arakawa T."/>
            <person name="Banh J."/>
            <person name="Banno F."/>
            <person name="Bowser L."/>
            <person name="Brooks S.Y."/>
            <person name="Carninci P."/>
            <person name="Chao Q."/>
            <person name="Choy N."/>
            <person name="Enju A."/>
            <person name="Goldsmith A.D."/>
            <person name="Gurjal M."/>
            <person name="Hansen N.F."/>
            <person name="Hayashizaki Y."/>
            <person name="Johnson-Hopson C."/>
            <person name="Hsuan V.W."/>
            <person name="Iida K."/>
            <person name="Karnes M."/>
            <person name="Khan S."/>
            <person name="Koesema E."/>
            <person name="Ishida J."/>
            <person name="Jiang P.X."/>
            <person name="Jones T."/>
            <person name="Kawai J."/>
            <person name="Kamiya A."/>
            <person name="Meyers C."/>
            <person name="Nakajima M."/>
            <person name="Narusaka M."/>
            <person name="Seki M."/>
            <person name="Sakurai T."/>
            <person name="Satou M."/>
            <person name="Tamse R."/>
            <person name="Vaysberg M."/>
            <person name="Wallender E.K."/>
            <person name="Wong C."/>
            <person name="Yamamura Y."/>
            <person name="Yuan S."/>
            <person name="Shinozaki K."/>
            <person name="Davis R.W."/>
            <person name="Theologis A."/>
            <person name="Ecker J.R."/>
        </authorList>
    </citation>
    <scope>NUCLEOTIDE SEQUENCE [LARGE SCALE MRNA]</scope>
    <source>
        <strain>cv. Columbia</strain>
    </source>
</reference>
<reference key="4">
    <citation type="submission" date="2006-07" db="EMBL/GenBank/DDBJ databases">
        <title>Large-scale analysis of RIKEN Arabidopsis full-length (RAFL) cDNAs.</title>
        <authorList>
            <person name="Totoki Y."/>
            <person name="Seki M."/>
            <person name="Ishida J."/>
            <person name="Nakajima M."/>
            <person name="Enju A."/>
            <person name="Kamiya A."/>
            <person name="Narusaka M."/>
            <person name="Shin-i T."/>
            <person name="Nakagawa M."/>
            <person name="Sakamoto N."/>
            <person name="Oishi K."/>
            <person name="Kohara Y."/>
            <person name="Kobayashi M."/>
            <person name="Toyoda A."/>
            <person name="Sakaki Y."/>
            <person name="Sakurai T."/>
            <person name="Iida K."/>
            <person name="Akiyama K."/>
            <person name="Satou M."/>
            <person name="Toyoda T."/>
            <person name="Konagaya A."/>
            <person name="Carninci P."/>
            <person name="Kawai J."/>
            <person name="Hayashizaki Y."/>
            <person name="Shinozaki K."/>
        </authorList>
    </citation>
    <scope>NUCLEOTIDE SEQUENCE [LARGE SCALE MRNA]</scope>
    <source>
        <strain>cv. Columbia</strain>
    </source>
</reference>
<name>FBK29_ARATH</name>
<keyword id="KW-0880">Kelch repeat</keyword>
<keyword id="KW-1185">Reference proteome</keyword>
<keyword id="KW-0677">Repeat</keyword>
<feature type="chain" id="PRO_0000283189" description="F-box/kelch-repeat protein At1g74510">
    <location>
        <begin position="1"/>
        <end position="451"/>
    </location>
</feature>
<feature type="domain" description="F-box">
    <location>
        <begin position="93"/>
        <end position="139"/>
    </location>
</feature>
<feature type="repeat" description="Kelch 1">
    <location>
        <begin position="137"/>
        <end position="188"/>
    </location>
</feature>
<feature type="repeat" description="Kelch 2">
    <location>
        <begin position="193"/>
        <end position="236"/>
    </location>
</feature>
<feature type="repeat" description="Kelch 3">
    <location>
        <begin position="237"/>
        <end position="284"/>
    </location>
</feature>
<feature type="repeat" description="Kelch 4">
    <location>
        <begin position="286"/>
        <end position="333"/>
    </location>
</feature>
<feature type="repeat" description="Kelch 5">
    <location>
        <begin position="349"/>
        <end position="395"/>
    </location>
</feature>